<sequence>MASVRAAVGASLAVARTRPRCVGLALPSSAPRSAWAAAMEPTPRWLAGLRFDNRALRELPVETPPPGPEDSLATPRPVPGACFSRARPAPLRRPRLVALSEPALALLGLEASEEAEVEAEAALFFSGNALLPGTEPAAHCYCGHQFGQFAGQLGDGAAMYLGEVCTAAGERWELQLKGAGPTPFSRQADGRKVLRSSIREFLCSEAMFHLGIPTTRAGACVTSESTVMRDVFYDGNPKYEKCTVVLRIAPTFIRFGSFEIFKPPDEHTGRAGPSVGRDDIRVQLLDYVISSFYPEIQAAHTCDTDNIQRNAAFFREVTQRTARMVAEWQCVGFCHGVLNTDNMSIVGLTIDYGPFGFLDRYDPDHICNASDNAGRYTYSKQPQVCKWNLQKLAEALEPELPLALAEAILKEEFDTEFQRHYLQKMRKKLGLIRVEKEEDGTLVAKLLETMHLTGADFTNTFCVLSSFPADLSDSAEFLSRLTSQCASLEELRLAFRPQMDPRQLSMMLMLAQSNPQLFALIGTQANVTKELERVEHQSRLEQLSPSDLQRKNRDHWEAWLQEYRDRLDKEKEGVGDTAAWQAERVRVMRANNPKYVLRNYIAQKAIEAAENGDFSEVRRVLKLLESPYHSEEEATGPEAVARSTEEQSSYSNRPPLWAAELCVTUSS</sequence>
<gene>
    <name evidence="7" type="primary">Selenoo</name>
    <name evidence="7" type="synonym">Selo</name>
</gene>
<name>SELO_MOUSE</name>
<proteinExistence type="evidence at protein level"/>
<reference key="1">
    <citation type="journal article" date="2005" name="Science">
        <title>The transcriptional landscape of the mammalian genome.</title>
        <authorList>
            <person name="Carninci P."/>
            <person name="Kasukawa T."/>
            <person name="Katayama S."/>
            <person name="Gough J."/>
            <person name="Frith M.C."/>
            <person name="Maeda N."/>
            <person name="Oyama R."/>
            <person name="Ravasi T."/>
            <person name="Lenhard B."/>
            <person name="Wells C."/>
            <person name="Kodzius R."/>
            <person name="Shimokawa K."/>
            <person name="Bajic V.B."/>
            <person name="Brenner S.E."/>
            <person name="Batalov S."/>
            <person name="Forrest A.R."/>
            <person name="Zavolan M."/>
            <person name="Davis M.J."/>
            <person name="Wilming L.G."/>
            <person name="Aidinis V."/>
            <person name="Allen J.E."/>
            <person name="Ambesi-Impiombato A."/>
            <person name="Apweiler R."/>
            <person name="Aturaliya R.N."/>
            <person name="Bailey T.L."/>
            <person name="Bansal M."/>
            <person name="Baxter L."/>
            <person name="Beisel K.W."/>
            <person name="Bersano T."/>
            <person name="Bono H."/>
            <person name="Chalk A.M."/>
            <person name="Chiu K.P."/>
            <person name="Choudhary V."/>
            <person name="Christoffels A."/>
            <person name="Clutterbuck D.R."/>
            <person name="Crowe M.L."/>
            <person name="Dalla E."/>
            <person name="Dalrymple B.P."/>
            <person name="de Bono B."/>
            <person name="Della Gatta G."/>
            <person name="di Bernardo D."/>
            <person name="Down T."/>
            <person name="Engstrom P."/>
            <person name="Fagiolini M."/>
            <person name="Faulkner G."/>
            <person name="Fletcher C.F."/>
            <person name="Fukushima T."/>
            <person name="Furuno M."/>
            <person name="Futaki S."/>
            <person name="Gariboldi M."/>
            <person name="Georgii-Hemming P."/>
            <person name="Gingeras T.R."/>
            <person name="Gojobori T."/>
            <person name="Green R.E."/>
            <person name="Gustincich S."/>
            <person name="Harbers M."/>
            <person name="Hayashi Y."/>
            <person name="Hensch T.K."/>
            <person name="Hirokawa N."/>
            <person name="Hill D."/>
            <person name="Huminiecki L."/>
            <person name="Iacono M."/>
            <person name="Ikeo K."/>
            <person name="Iwama A."/>
            <person name="Ishikawa T."/>
            <person name="Jakt M."/>
            <person name="Kanapin A."/>
            <person name="Katoh M."/>
            <person name="Kawasawa Y."/>
            <person name="Kelso J."/>
            <person name="Kitamura H."/>
            <person name="Kitano H."/>
            <person name="Kollias G."/>
            <person name="Krishnan S.P."/>
            <person name="Kruger A."/>
            <person name="Kummerfeld S.K."/>
            <person name="Kurochkin I.V."/>
            <person name="Lareau L.F."/>
            <person name="Lazarevic D."/>
            <person name="Lipovich L."/>
            <person name="Liu J."/>
            <person name="Liuni S."/>
            <person name="McWilliam S."/>
            <person name="Madan Babu M."/>
            <person name="Madera M."/>
            <person name="Marchionni L."/>
            <person name="Matsuda H."/>
            <person name="Matsuzawa S."/>
            <person name="Miki H."/>
            <person name="Mignone F."/>
            <person name="Miyake S."/>
            <person name="Morris K."/>
            <person name="Mottagui-Tabar S."/>
            <person name="Mulder N."/>
            <person name="Nakano N."/>
            <person name="Nakauchi H."/>
            <person name="Ng P."/>
            <person name="Nilsson R."/>
            <person name="Nishiguchi S."/>
            <person name="Nishikawa S."/>
            <person name="Nori F."/>
            <person name="Ohara O."/>
            <person name="Okazaki Y."/>
            <person name="Orlando V."/>
            <person name="Pang K.C."/>
            <person name="Pavan W.J."/>
            <person name="Pavesi G."/>
            <person name="Pesole G."/>
            <person name="Petrovsky N."/>
            <person name="Piazza S."/>
            <person name="Reed J."/>
            <person name="Reid J.F."/>
            <person name="Ring B.Z."/>
            <person name="Ringwald M."/>
            <person name="Rost B."/>
            <person name="Ruan Y."/>
            <person name="Salzberg S.L."/>
            <person name="Sandelin A."/>
            <person name="Schneider C."/>
            <person name="Schoenbach C."/>
            <person name="Sekiguchi K."/>
            <person name="Semple C.A."/>
            <person name="Seno S."/>
            <person name="Sessa L."/>
            <person name="Sheng Y."/>
            <person name="Shibata Y."/>
            <person name="Shimada H."/>
            <person name="Shimada K."/>
            <person name="Silva D."/>
            <person name="Sinclair B."/>
            <person name="Sperling S."/>
            <person name="Stupka E."/>
            <person name="Sugiura K."/>
            <person name="Sultana R."/>
            <person name="Takenaka Y."/>
            <person name="Taki K."/>
            <person name="Tammoja K."/>
            <person name="Tan S.L."/>
            <person name="Tang S."/>
            <person name="Taylor M.S."/>
            <person name="Tegner J."/>
            <person name="Teichmann S.A."/>
            <person name="Ueda H.R."/>
            <person name="van Nimwegen E."/>
            <person name="Verardo R."/>
            <person name="Wei C.L."/>
            <person name="Yagi K."/>
            <person name="Yamanishi H."/>
            <person name="Zabarovsky E."/>
            <person name="Zhu S."/>
            <person name="Zimmer A."/>
            <person name="Hide W."/>
            <person name="Bult C."/>
            <person name="Grimmond S.M."/>
            <person name="Teasdale R.D."/>
            <person name="Liu E.T."/>
            <person name="Brusic V."/>
            <person name="Quackenbush J."/>
            <person name="Wahlestedt C."/>
            <person name="Mattick J.S."/>
            <person name="Hume D.A."/>
            <person name="Kai C."/>
            <person name="Sasaki D."/>
            <person name="Tomaru Y."/>
            <person name="Fukuda S."/>
            <person name="Kanamori-Katayama M."/>
            <person name="Suzuki M."/>
            <person name="Aoki J."/>
            <person name="Arakawa T."/>
            <person name="Iida J."/>
            <person name="Imamura K."/>
            <person name="Itoh M."/>
            <person name="Kato T."/>
            <person name="Kawaji H."/>
            <person name="Kawagashira N."/>
            <person name="Kawashima T."/>
            <person name="Kojima M."/>
            <person name="Kondo S."/>
            <person name="Konno H."/>
            <person name="Nakano K."/>
            <person name="Ninomiya N."/>
            <person name="Nishio T."/>
            <person name="Okada M."/>
            <person name="Plessy C."/>
            <person name="Shibata K."/>
            <person name="Shiraki T."/>
            <person name="Suzuki S."/>
            <person name="Tagami M."/>
            <person name="Waki K."/>
            <person name="Watahiki A."/>
            <person name="Okamura-Oho Y."/>
            <person name="Suzuki H."/>
            <person name="Kawai J."/>
            <person name="Hayashizaki Y."/>
        </authorList>
    </citation>
    <scope>NUCLEOTIDE SEQUENCE [LARGE SCALE MRNA]</scope>
    <source>
        <strain>C57BL/6J</strain>
        <tissue>Liver</tissue>
    </source>
</reference>
<reference key="2">
    <citation type="journal article" date="2009" name="PLoS Biol.">
        <title>Lineage-specific biology revealed by a finished genome assembly of the mouse.</title>
        <authorList>
            <person name="Church D.M."/>
            <person name="Goodstadt L."/>
            <person name="Hillier L.W."/>
            <person name="Zody M.C."/>
            <person name="Goldstein S."/>
            <person name="She X."/>
            <person name="Bult C.J."/>
            <person name="Agarwala R."/>
            <person name="Cherry J.L."/>
            <person name="DiCuccio M."/>
            <person name="Hlavina W."/>
            <person name="Kapustin Y."/>
            <person name="Meric P."/>
            <person name="Maglott D."/>
            <person name="Birtle Z."/>
            <person name="Marques A.C."/>
            <person name="Graves T."/>
            <person name="Zhou S."/>
            <person name="Teague B."/>
            <person name="Potamousis K."/>
            <person name="Churas C."/>
            <person name="Place M."/>
            <person name="Herschleb J."/>
            <person name="Runnheim R."/>
            <person name="Forrest D."/>
            <person name="Amos-Landgraf J."/>
            <person name="Schwartz D.C."/>
            <person name="Cheng Z."/>
            <person name="Lindblad-Toh K."/>
            <person name="Eichler E.E."/>
            <person name="Ponting C.P."/>
        </authorList>
    </citation>
    <scope>NUCLEOTIDE SEQUENCE [LARGE SCALE GENOMIC DNA]</scope>
    <source>
        <strain>C57BL/6J</strain>
    </source>
</reference>
<reference key="3">
    <citation type="journal article" date="2004" name="Genome Res.">
        <title>The status, quality, and expansion of the NIH full-length cDNA project: the Mammalian Gene Collection (MGC).</title>
        <authorList>
            <consortium name="The MGC Project Team"/>
        </authorList>
    </citation>
    <scope>NUCLEOTIDE SEQUENCE [LARGE SCALE MRNA] OF 326-667</scope>
    <source>
        <strain>FVB/N</strain>
        <tissue>Liver</tissue>
    </source>
</reference>
<reference key="4">
    <citation type="journal article" date="2010" name="Cell">
        <title>A tissue-specific atlas of mouse protein phosphorylation and expression.</title>
        <authorList>
            <person name="Huttlin E.L."/>
            <person name="Jedrychowski M.P."/>
            <person name="Elias J.E."/>
            <person name="Goswami T."/>
            <person name="Rad R."/>
            <person name="Beausoleil S.A."/>
            <person name="Villen J."/>
            <person name="Haas W."/>
            <person name="Sowa M.E."/>
            <person name="Gygi S.P."/>
        </authorList>
    </citation>
    <scope>IDENTIFICATION BY MASS SPECTROMETRY [LARGE SCALE ANALYSIS]</scope>
    <source>
        <tissue>Brain</tissue>
        <tissue>Brown adipose tissue</tissue>
        <tissue>Heart</tissue>
        <tissue>Kidney</tissue>
        <tissue>Liver</tissue>
        <tissue>Spleen</tissue>
        <tissue>Testis</tissue>
    </source>
</reference>
<accession>Q9DBC0</accession>
<accession>E9QPP4</accession>
<accession>Q80ZK3</accession>
<keyword id="KW-0067">ATP-binding</keyword>
<keyword id="KW-0460">Magnesium</keyword>
<keyword id="KW-0479">Metal-binding</keyword>
<keyword id="KW-0496">Mitochondrion</keyword>
<keyword id="KW-0547">Nucleotide-binding</keyword>
<keyword id="KW-0548">Nucleotidyltransferase</keyword>
<keyword id="KW-0597">Phosphoprotein</keyword>
<keyword id="KW-1185">Reference proteome</keyword>
<keyword id="KW-0712">Selenocysteine</keyword>
<keyword id="KW-0808">Transferase</keyword>
<keyword id="KW-0809">Transit peptide</keyword>
<feature type="transit peptide" description="Mitochondrion" evidence="4">
    <location>
        <begin position="1"/>
        <end position="6"/>
    </location>
</feature>
<feature type="chain" id="PRO_0000121400" description="Protein adenylyltransferase SelO, mitochondrial">
    <location>
        <begin position="7"/>
        <end position="667"/>
    </location>
</feature>
<feature type="region of interest" description="Disordered" evidence="5">
    <location>
        <begin position="628"/>
        <end position="652"/>
    </location>
</feature>
<feature type="active site" description="Proton acceptor" evidence="2">
    <location>
        <position position="341"/>
    </location>
</feature>
<feature type="binding site" evidence="2">
    <location>
        <position position="154"/>
    </location>
    <ligand>
        <name>ATP</name>
        <dbReference type="ChEBI" id="CHEBI:30616"/>
    </ligand>
</feature>
<feature type="binding site" evidence="2">
    <location>
        <position position="156"/>
    </location>
    <ligand>
        <name>ATP</name>
        <dbReference type="ChEBI" id="CHEBI:30616"/>
    </ligand>
</feature>
<feature type="binding site" evidence="2">
    <location>
        <position position="177"/>
    </location>
    <ligand>
        <name>ATP</name>
        <dbReference type="ChEBI" id="CHEBI:30616"/>
    </ligand>
</feature>
<feature type="binding site" evidence="2">
    <location>
        <position position="189"/>
    </location>
    <ligand>
        <name>ATP</name>
        <dbReference type="ChEBI" id="CHEBI:30616"/>
    </ligand>
</feature>
<feature type="binding site" evidence="2">
    <location>
        <position position="190"/>
    </location>
    <ligand>
        <name>ATP</name>
        <dbReference type="ChEBI" id="CHEBI:30616"/>
    </ligand>
</feature>
<feature type="binding site" evidence="2">
    <location>
        <position position="247"/>
    </location>
    <ligand>
        <name>ATP</name>
        <dbReference type="ChEBI" id="CHEBI:30616"/>
    </ligand>
</feature>
<feature type="binding site" evidence="2">
    <location>
        <position position="254"/>
    </location>
    <ligand>
        <name>ATP</name>
        <dbReference type="ChEBI" id="CHEBI:30616"/>
    </ligand>
</feature>
<feature type="binding site" evidence="2">
    <location>
        <position position="342"/>
    </location>
    <ligand>
        <name>Mg(2+)</name>
        <dbReference type="ChEBI" id="CHEBI:18420"/>
    </ligand>
</feature>
<feature type="binding site" evidence="2">
    <location>
        <position position="351"/>
    </location>
    <ligand>
        <name>ATP</name>
        <dbReference type="ChEBI" id="CHEBI:30616"/>
    </ligand>
</feature>
<feature type="binding site" evidence="2">
    <location>
        <position position="351"/>
    </location>
    <ligand>
        <name>Mg(2+)</name>
        <dbReference type="ChEBI" id="CHEBI:18420"/>
    </ligand>
</feature>
<feature type="non-standard amino acid" description="Selenocysteine" evidence="1">
    <location>
        <position position="665"/>
    </location>
</feature>
<feature type="modified residue" description="Phosphothreonine" evidence="3">
    <location>
        <position position="635"/>
    </location>
</feature>
<feature type="modified residue" description="Phosphoserine" evidence="3">
    <location>
        <position position="651"/>
    </location>
</feature>
<feature type="sequence conflict" description="In Ref. 1; BAB23774." evidence="6" ref="1">
    <original>R</original>
    <variation>L</variation>
    <location>
        <position position="619"/>
    </location>
</feature>
<comment type="function">
    <text evidence="3">Catalyzes the transfer of adenosine 5'-monophosphate (AMP) to Ser, Thr and Tyr residues of target proteins (AMPylation). May be a redox-active mitochondrial selenoprotein which interacts with a redox target protein.</text>
</comment>
<comment type="catalytic activity">
    <reaction evidence="3">
        <text>L-tyrosyl-[protein] + ATP = O-(5'-adenylyl)-L-tyrosyl-[protein] + diphosphate</text>
        <dbReference type="Rhea" id="RHEA:54288"/>
        <dbReference type="Rhea" id="RHEA-COMP:10136"/>
        <dbReference type="Rhea" id="RHEA-COMP:13846"/>
        <dbReference type="ChEBI" id="CHEBI:30616"/>
        <dbReference type="ChEBI" id="CHEBI:33019"/>
        <dbReference type="ChEBI" id="CHEBI:46858"/>
        <dbReference type="ChEBI" id="CHEBI:83624"/>
        <dbReference type="EC" id="2.7.7.108"/>
    </reaction>
</comment>
<comment type="catalytic activity">
    <reaction evidence="3">
        <text>L-threonyl-[protein] + ATP = 3-O-(5'-adenylyl)-L-threonyl-[protein] + diphosphate</text>
        <dbReference type="Rhea" id="RHEA:54292"/>
        <dbReference type="Rhea" id="RHEA-COMP:11060"/>
        <dbReference type="Rhea" id="RHEA-COMP:13847"/>
        <dbReference type="ChEBI" id="CHEBI:30013"/>
        <dbReference type="ChEBI" id="CHEBI:30616"/>
        <dbReference type="ChEBI" id="CHEBI:33019"/>
        <dbReference type="ChEBI" id="CHEBI:138113"/>
        <dbReference type="EC" id="2.7.7.108"/>
    </reaction>
</comment>
<comment type="catalytic activity">
    <reaction evidence="3">
        <text>L-seryl-[protein] + ATP = 3-O-(5'-adenylyl)-L-seryl-[protein] + diphosphate</text>
        <dbReference type="Rhea" id="RHEA:58120"/>
        <dbReference type="Rhea" id="RHEA-COMP:9863"/>
        <dbReference type="Rhea" id="RHEA-COMP:15073"/>
        <dbReference type="ChEBI" id="CHEBI:29999"/>
        <dbReference type="ChEBI" id="CHEBI:30616"/>
        <dbReference type="ChEBI" id="CHEBI:33019"/>
        <dbReference type="ChEBI" id="CHEBI:142516"/>
    </reaction>
</comment>
<comment type="cofactor">
    <cofactor evidence="2">
        <name>Mg(2+)</name>
        <dbReference type="ChEBI" id="CHEBI:18420"/>
    </cofactor>
</comment>
<comment type="subcellular location">
    <subcellularLocation>
        <location evidence="3">Mitochondrion</location>
    </subcellularLocation>
</comment>
<comment type="similarity">
    <text evidence="6">Belongs to the SELO family.</text>
</comment>
<comment type="sequence caution" evidence="6">
    <conflict type="erroneous termination">
        <sequence resource="EMBL-CDS" id="AAH48849"/>
    </conflict>
    <text>Truncated C-terminus.</text>
</comment>
<comment type="sequence caution" evidence="6">
    <conflict type="erroneous termination">
        <sequence resource="EMBL-CDS" id="BAB23774"/>
    </conflict>
    <text>Truncated C-terminus.</text>
</comment>
<protein>
    <recommendedName>
        <fullName evidence="6">Protein adenylyltransferase SelO, mitochondrial</fullName>
        <ecNumber evidence="3">2.7.7.-</ecNumber>
        <ecNumber evidence="3">2.7.7.108</ecNumber>
    </recommendedName>
    <alternativeName>
        <fullName evidence="3">Selenoprotein O</fullName>
        <shortName evidence="3">SelO</shortName>
    </alternativeName>
</protein>
<organism>
    <name type="scientific">Mus musculus</name>
    <name type="common">Mouse</name>
    <dbReference type="NCBI Taxonomy" id="10090"/>
    <lineage>
        <taxon>Eukaryota</taxon>
        <taxon>Metazoa</taxon>
        <taxon>Chordata</taxon>
        <taxon>Craniata</taxon>
        <taxon>Vertebrata</taxon>
        <taxon>Euteleostomi</taxon>
        <taxon>Mammalia</taxon>
        <taxon>Eutheria</taxon>
        <taxon>Euarchontoglires</taxon>
        <taxon>Glires</taxon>
        <taxon>Rodentia</taxon>
        <taxon>Myomorpha</taxon>
        <taxon>Muroidea</taxon>
        <taxon>Muridae</taxon>
        <taxon>Murinae</taxon>
        <taxon>Mus</taxon>
        <taxon>Mus</taxon>
    </lineage>
</organism>
<dbReference type="EC" id="2.7.7.-" evidence="3"/>
<dbReference type="EC" id="2.7.7.108" evidence="3"/>
<dbReference type="EMBL" id="AK005048">
    <property type="protein sequence ID" value="BAB23774.1"/>
    <property type="status" value="ALT_SEQ"/>
    <property type="molecule type" value="mRNA"/>
</dbReference>
<dbReference type="EMBL" id="AC113069">
    <property type="status" value="NOT_ANNOTATED_CDS"/>
    <property type="molecule type" value="Genomic_DNA"/>
</dbReference>
<dbReference type="EMBL" id="BC048849">
    <property type="protein sequence ID" value="AAH48849.1"/>
    <property type="status" value="ALT_SEQ"/>
    <property type="molecule type" value="mRNA"/>
</dbReference>
<dbReference type="CCDS" id="CCDS27738.1"/>
<dbReference type="RefSeq" id="NP_082181.2">
    <property type="nucleotide sequence ID" value="NM_027905.3"/>
</dbReference>
<dbReference type="BioGRID" id="230195">
    <property type="interactions" value="11"/>
</dbReference>
<dbReference type="FunCoup" id="Q9DBC0">
    <property type="interactions" value="954"/>
</dbReference>
<dbReference type="STRING" id="10090.ENSMUSP00000081020"/>
<dbReference type="GlyGen" id="Q9DBC0">
    <property type="glycosylation" value="1 site"/>
</dbReference>
<dbReference type="iPTMnet" id="Q9DBC0"/>
<dbReference type="PhosphoSitePlus" id="Q9DBC0"/>
<dbReference type="SwissPalm" id="Q9DBC0"/>
<dbReference type="jPOST" id="Q9DBC0"/>
<dbReference type="PaxDb" id="10090-ENSMUSP00000081020"/>
<dbReference type="PeptideAtlas" id="Q9DBC0"/>
<dbReference type="ProteomicsDB" id="257118"/>
<dbReference type="Pumba" id="Q9DBC0"/>
<dbReference type="Antibodypedia" id="76483">
    <property type="antibodies" value="7 antibodies from 5 providers"/>
</dbReference>
<dbReference type="DNASU" id="223776"/>
<dbReference type="Ensembl" id="ENSMUST00000082439.6">
    <property type="protein sequence ID" value="ENSMUSP00000081020.6"/>
    <property type="gene ID" value="ENSMUSG00000035757.18"/>
</dbReference>
<dbReference type="GeneID" id="223776"/>
<dbReference type="KEGG" id="mmu:223776"/>
<dbReference type="UCSC" id="uc007xff.1">
    <property type="organism name" value="mouse"/>
</dbReference>
<dbReference type="AGR" id="MGI:1919007"/>
<dbReference type="CTD" id="83642"/>
<dbReference type="MGI" id="MGI:1919007">
    <property type="gene designation" value="Selenoo"/>
</dbReference>
<dbReference type="VEuPathDB" id="HostDB:ENSMUSG00000035757"/>
<dbReference type="eggNOG" id="KOG2542">
    <property type="taxonomic scope" value="Eukaryota"/>
</dbReference>
<dbReference type="GeneTree" id="ENSGT00390000005508"/>
<dbReference type="HOGENOM" id="CLU_010245_4_0_1"/>
<dbReference type="InParanoid" id="Q9DBC0"/>
<dbReference type="OMA" id="LCVTXSS"/>
<dbReference type="OrthoDB" id="10254721at2759"/>
<dbReference type="PhylomeDB" id="Q9DBC0"/>
<dbReference type="TreeFam" id="TF323296"/>
<dbReference type="BioGRID-ORCS" id="223776">
    <property type="hits" value="4 hits in 76 CRISPR screens"/>
</dbReference>
<dbReference type="ChiTaRS" id="Selenoo">
    <property type="organism name" value="mouse"/>
</dbReference>
<dbReference type="PRO" id="PR:Q9DBC0"/>
<dbReference type="Proteomes" id="UP000000589">
    <property type="component" value="Chromosome 15"/>
</dbReference>
<dbReference type="RNAct" id="Q9DBC0">
    <property type="molecule type" value="protein"/>
</dbReference>
<dbReference type="Bgee" id="ENSMUSG00000035757">
    <property type="expression patterns" value="Expressed in left lobe of liver and 225 other cell types or tissues"/>
</dbReference>
<dbReference type="ExpressionAtlas" id="Q9DBC0">
    <property type="expression patterns" value="baseline and differential"/>
</dbReference>
<dbReference type="GO" id="GO:0005694">
    <property type="term" value="C:chromosome"/>
    <property type="evidence" value="ECO:0007669"/>
    <property type="project" value="Ensembl"/>
</dbReference>
<dbReference type="GO" id="GO:0005739">
    <property type="term" value="C:mitochondrion"/>
    <property type="evidence" value="ECO:0000250"/>
    <property type="project" value="UniProtKB"/>
</dbReference>
<dbReference type="GO" id="GO:0070733">
    <property type="term" value="F:AMPylase activity"/>
    <property type="evidence" value="ECO:0007669"/>
    <property type="project" value="Ensembl"/>
</dbReference>
<dbReference type="GO" id="GO:0005524">
    <property type="term" value="F:ATP binding"/>
    <property type="evidence" value="ECO:0007669"/>
    <property type="project" value="UniProtKB-KW"/>
</dbReference>
<dbReference type="GO" id="GO:0046872">
    <property type="term" value="F:metal ion binding"/>
    <property type="evidence" value="ECO:0007669"/>
    <property type="project" value="UniProtKB-KW"/>
</dbReference>
<dbReference type="HAMAP" id="MF_00692">
    <property type="entry name" value="YdiU_SelO"/>
    <property type="match status" value="1"/>
</dbReference>
<dbReference type="InterPro" id="IPR003846">
    <property type="entry name" value="SelO"/>
</dbReference>
<dbReference type="NCBIfam" id="NF000658">
    <property type="entry name" value="PRK00029.1"/>
    <property type="match status" value="1"/>
</dbReference>
<dbReference type="PANTHER" id="PTHR12153:SF15">
    <property type="entry name" value="PROTEIN ADENYLYLTRANSFERASE SELO, MITOCHONDRIAL"/>
    <property type="match status" value="1"/>
</dbReference>
<dbReference type="PANTHER" id="PTHR12153">
    <property type="entry name" value="SELENOPROTEIN O"/>
    <property type="match status" value="1"/>
</dbReference>
<dbReference type="Pfam" id="PF02696">
    <property type="entry name" value="SelO"/>
    <property type="match status" value="1"/>
</dbReference>
<evidence type="ECO:0000250" key="1"/>
<evidence type="ECO:0000250" key="2">
    <source>
        <dbReference type="UniProtKB" id="Q87VB1"/>
    </source>
</evidence>
<evidence type="ECO:0000250" key="3">
    <source>
        <dbReference type="UniProtKB" id="Q9BVL4"/>
    </source>
</evidence>
<evidence type="ECO:0000255" key="4"/>
<evidence type="ECO:0000256" key="5">
    <source>
        <dbReference type="SAM" id="MobiDB-lite"/>
    </source>
</evidence>
<evidence type="ECO:0000305" key="6"/>
<evidence type="ECO:0000312" key="7">
    <source>
        <dbReference type="MGI" id="MGI:1919007"/>
    </source>
</evidence>